<name>ATPF_LACH4</name>
<gene>
    <name evidence="1" type="primary">atpF</name>
    <name type="ordered locus">lhv_0808</name>
</gene>
<dbReference type="EMBL" id="CP000517">
    <property type="protein sequence ID" value="ABX26935.1"/>
    <property type="molecule type" value="Genomic_DNA"/>
</dbReference>
<dbReference type="RefSeq" id="WP_012211669.1">
    <property type="nucleotide sequence ID" value="NC_010080.1"/>
</dbReference>
<dbReference type="SMR" id="A8YUJ7"/>
<dbReference type="KEGG" id="lhe:lhv_0808"/>
<dbReference type="eggNOG" id="COG0711">
    <property type="taxonomic scope" value="Bacteria"/>
</dbReference>
<dbReference type="HOGENOM" id="CLU_079215_4_2_9"/>
<dbReference type="Proteomes" id="UP000000790">
    <property type="component" value="Chromosome"/>
</dbReference>
<dbReference type="GO" id="GO:0005886">
    <property type="term" value="C:plasma membrane"/>
    <property type="evidence" value="ECO:0007669"/>
    <property type="project" value="UniProtKB-SubCell"/>
</dbReference>
<dbReference type="GO" id="GO:0045259">
    <property type="term" value="C:proton-transporting ATP synthase complex"/>
    <property type="evidence" value="ECO:0007669"/>
    <property type="project" value="UniProtKB-KW"/>
</dbReference>
<dbReference type="GO" id="GO:0046933">
    <property type="term" value="F:proton-transporting ATP synthase activity, rotational mechanism"/>
    <property type="evidence" value="ECO:0007669"/>
    <property type="project" value="UniProtKB-UniRule"/>
</dbReference>
<dbReference type="GO" id="GO:0046961">
    <property type="term" value="F:proton-transporting ATPase activity, rotational mechanism"/>
    <property type="evidence" value="ECO:0007669"/>
    <property type="project" value="TreeGrafter"/>
</dbReference>
<dbReference type="CDD" id="cd06503">
    <property type="entry name" value="ATP-synt_Fo_b"/>
    <property type="match status" value="1"/>
</dbReference>
<dbReference type="HAMAP" id="MF_01398">
    <property type="entry name" value="ATP_synth_b_bprime"/>
    <property type="match status" value="1"/>
</dbReference>
<dbReference type="InterPro" id="IPR002146">
    <property type="entry name" value="ATP_synth_b/b'su_bac/chlpt"/>
</dbReference>
<dbReference type="InterPro" id="IPR005864">
    <property type="entry name" value="ATP_synth_F0_bsu_bac"/>
</dbReference>
<dbReference type="InterPro" id="IPR050059">
    <property type="entry name" value="ATP_synthase_B_chain"/>
</dbReference>
<dbReference type="NCBIfam" id="TIGR01144">
    <property type="entry name" value="ATP_synt_b"/>
    <property type="match status" value="1"/>
</dbReference>
<dbReference type="PANTHER" id="PTHR33445:SF1">
    <property type="entry name" value="ATP SYNTHASE SUBUNIT B"/>
    <property type="match status" value="1"/>
</dbReference>
<dbReference type="PANTHER" id="PTHR33445">
    <property type="entry name" value="ATP SYNTHASE SUBUNIT B', CHLOROPLASTIC"/>
    <property type="match status" value="1"/>
</dbReference>
<dbReference type="Pfam" id="PF00430">
    <property type="entry name" value="ATP-synt_B"/>
    <property type="match status" value="1"/>
</dbReference>
<evidence type="ECO:0000255" key="1">
    <source>
        <dbReference type="HAMAP-Rule" id="MF_01398"/>
    </source>
</evidence>
<proteinExistence type="inferred from homology"/>
<reference key="1">
    <citation type="journal article" date="2008" name="J. Bacteriol.">
        <title>Genome sequence of Lactobacillus helveticus: an organism distinguished by selective gene loss and IS element expansion.</title>
        <authorList>
            <person name="Callanan M."/>
            <person name="Kaleta P."/>
            <person name="O'Callaghan J."/>
            <person name="O'Sullivan O."/>
            <person name="Jordan K."/>
            <person name="McAuliffe O."/>
            <person name="Sangrador-Vegas A."/>
            <person name="Slattery L."/>
            <person name="Fitzgerald G.F."/>
            <person name="Beresford T."/>
            <person name="Ross R.P."/>
        </authorList>
    </citation>
    <scope>NUCLEOTIDE SEQUENCE [LARGE SCALE GENOMIC DNA]</scope>
    <source>
        <strain>DPC 4571</strain>
    </source>
</reference>
<sequence>MTIQTLFAASHHIYLGNALWYLICFAILLLLIKHFAWGPVSDMMEKRRQKVINDLDSAASDRKKAETLANEREAALKNSRQEATQILSDAKANAQKTGKEIVASANEDAAAIRKKANEEAAKAKSDALDSARDQVADISLAIAEKVIAKNLSAEDQKDLVDQFIKELDD</sequence>
<comment type="function">
    <text evidence="1">F(1)F(0) ATP synthase produces ATP from ADP in the presence of a proton or sodium gradient. F-type ATPases consist of two structural domains, F(1) containing the extramembraneous catalytic core and F(0) containing the membrane proton channel, linked together by a central stalk and a peripheral stalk. During catalysis, ATP synthesis in the catalytic domain of F(1) is coupled via a rotary mechanism of the central stalk subunits to proton translocation.</text>
</comment>
<comment type="function">
    <text evidence="1">Component of the F(0) channel, it forms part of the peripheral stalk, linking F(1) to F(0).</text>
</comment>
<comment type="subunit">
    <text evidence="1">F-type ATPases have 2 components, F(1) - the catalytic core - and F(0) - the membrane proton channel. F(1) has five subunits: alpha(3), beta(3), gamma(1), delta(1), epsilon(1). F(0) has three main subunits: a(1), b(2) and c(10-14). The alpha and beta chains form an alternating ring which encloses part of the gamma chain. F(1) is attached to F(0) by a central stalk formed by the gamma and epsilon chains, while a peripheral stalk is formed by the delta and b chains.</text>
</comment>
<comment type="subcellular location">
    <subcellularLocation>
        <location evidence="1">Cell membrane</location>
        <topology evidence="1">Single-pass membrane protein</topology>
    </subcellularLocation>
</comment>
<comment type="similarity">
    <text evidence="1">Belongs to the ATPase B chain family.</text>
</comment>
<accession>A8YUJ7</accession>
<protein>
    <recommendedName>
        <fullName evidence="1">ATP synthase subunit b</fullName>
    </recommendedName>
    <alternativeName>
        <fullName evidence="1">ATP synthase F(0) sector subunit b</fullName>
    </alternativeName>
    <alternativeName>
        <fullName evidence="1">ATPase subunit I</fullName>
    </alternativeName>
    <alternativeName>
        <fullName evidence="1">F-type ATPase subunit b</fullName>
        <shortName evidence="1">F-ATPase subunit b</shortName>
    </alternativeName>
</protein>
<keyword id="KW-0066">ATP synthesis</keyword>
<keyword id="KW-1003">Cell membrane</keyword>
<keyword id="KW-0138">CF(0)</keyword>
<keyword id="KW-0375">Hydrogen ion transport</keyword>
<keyword id="KW-0406">Ion transport</keyword>
<keyword id="KW-0472">Membrane</keyword>
<keyword id="KW-0812">Transmembrane</keyword>
<keyword id="KW-1133">Transmembrane helix</keyword>
<keyword id="KW-0813">Transport</keyword>
<organism>
    <name type="scientific">Lactobacillus helveticus (strain DPC 4571)</name>
    <dbReference type="NCBI Taxonomy" id="405566"/>
    <lineage>
        <taxon>Bacteria</taxon>
        <taxon>Bacillati</taxon>
        <taxon>Bacillota</taxon>
        <taxon>Bacilli</taxon>
        <taxon>Lactobacillales</taxon>
        <taxon>Lactobacillaceae</taxon>
        <taxon>Lactobacillus</taxon>
    </lineage>
</organism>
<feature type="chain" id="PRO_0000368545" description="ATP synthase subunit b">
    <location>
        <begin position="1"/>
        <end position="169"/>
    </location>
</feature>
<feature type="transmembrane region" description="Helical" evidence="1">
    <location>
        <begin position="12"/>
        <end position="32"/>
    </location>
</feature>